<accession>Q9JKT2</accession>
<accession>Q2M2Q7</accession>
<evidence type="ECO:0000255" key="1"/>
<evidence type="ECO:0000269" key="2">
    <source>
    </source>
</evidence>
<evidence type="ECO:0000305" key="3"/>
<sequence>MMEGHMLFFLLVVVVQFLTGVLANGLIVVVNAIDLIMWKKMAPLDLLLFCLATSRIILQLCILFAQLGLSCLVRHTLFADNVTFVYIINELSLWFATWLGVFYCAKIATIPHPLFLWLKMRISRLVPWLILASVVYVTVTTFIHSRETSELPKQIFISFFSKNTTRVRPAHATLLSVFVFGLTLPFLIFTVAVLLLLSSLWNHSRQMRTMVGTREPSRHALVSAMLSILSFLILYLSHDMVAVLICTQGLHFGSRTFAFCLLVIGMYPSLHSIVLILGNPKLKRNAKTFIVHCKCCHCARAWVTSRNPRLSDLPVPATHHSANKTSCSEACIMPS</sequence>
<gene>
    <name type="primary">Tas2r119</name>
    <name type="synonym">Tas2r19</name>
</gene>
<proteinExistence type="evidence at protein level"/>
<comment type="function">
    <text>Gustducin-coupled receptor implicated in the perception of bitter compounds in the oral cavity and the gastrointestinal tract. Signals through PLCB2 and the calcium-regulated cation channel TRPM5.</text>
</comment>
<comment type="subcellular location">
    <subcellularLocation>
        <location>Membrane</location>
        <topology>Multi-pass membrane protein</topology>
    </subcellularLocation>
</comment>
<comment type="tissue specificity">
    <text evidence="2">Expressed in subsets of taste receptor cells of the tongue and palate epithelium and exclusively in gustducin-positive cells. Expressed in 15% taste bud cells in circumvallate and foliate papillae but only in 2% in fungiform papillae. Expressed in the gastro and duodenal tissue. Not expressed in colon, liver, heart and kidney.</text>
</comment>
<comment type="miscellaneous">
    <text>Several bitter taste receptors are expressed in a single taste receptor cell.</text>
</comment>
<comment type="similarity">
    <text evidence="3">Belongs to the G-protein coupled receptor T2R family.</text>
</comment>
<reference key="1">
    <citation type="journal article" date="2000" name="Cell">
        <title>A novel family of mammalian taste receptors.</title>
        <authorList>
            <person name="Adler E."/>
            <person name="Hoon M.A."/>
            <person name="Mueller K.L."/>
            <person name="Chandrashekar J."/>
            <person name="Ryba N.J.P."/>
            <person name="Zuker C.S."/>
        </authorList>
    </citation>
    <scope>NUCLEOTIDE SEQUENCE [GENOMIC DNA]</scope>
    <source>
        <strain>129/SvJ</strain>
    </source>
</reference>
<reference key="2">
    <citation type="journal article" date="2004" name="Genome Res.">
        <title>The status, quality, and expansion of the NIH full-length cDNA project: the Mammalian Gene Collection (MGC).</title>
        <authorList>
            <consortium name="The MGC Project Team"/>
        </authorList>
    </citation>
    <scope>NUCLEOTIDE SEQUENCE [LARGE SCALE MRNA] OF 2-335</scope>
</reference>
<reference key="3">
    <citation type="journal article" date="2000" name="Cell">
        <title>T2Rs function as bitter taste receptors.</title>
        <authorList>
            <person name="Chandrashekar J."/>
            <person name="Mueller K.L."/>
            <person name="Hoon M.A."/>
            <person name="Adler E."/>
            <person name="Feng L."/>
            <person name="Guo W."/>
            <person name="Zuker C.S."/>
            <person name="Ryba N.J.P."/>
        </authorList>
    </citation>
    <scope>CHARACTERIZATION</scope>
</reference>
<reference key="4">
    <citation type="journal article" date="2002" name="Proc. Natl. Acad. Sci. U.S.A.">
        <title>Expression of bitter taste receptors of the T2R family in the gastrointestinal tract and enteroendocrine STC-1 cells.</title>
        <authorList>
            <person name="Wu S.V."/>
            <person name="Rozengurt N."/>
            <person name="Yang M."/>
            <person name="Young S.H."/>
            <person name="Sinnett-Smith J."/>
            <person name="Rozengurt E."/>
        </authorList>
    </citation>
    <scope>TISSUE SPECIFICITY</scope>
</reference>
<reference key="5">
    <citation type="journal article" date="2002" name="Curr. Opin. Neurobiol.">
        <title>Receptors for bitter and sweet taste.</title>
        <authorList>
            <person name="Montmayeur J.-P."/>
            <person name="Matsunami H."/>
        </authorList>
    </citation>
    <scope>REVIEW</scope>
</reference>
<reference key="6">
    <citation type="journal article" date="2002" name="J. Biol. Chem.">
        <title>Molecular mechanisms of bitter and sweet taste transduction.</title>
        <authorList>
            <person name="Margolskee R.F."/>
        </authorList>
    </citation>
    <scope>REVIEW</scope>
</reference>
<reference key="7">
    <citation type="journal article" date="2003" name="Cell">
        <title>Coding of sweet, bitter, and umami tastes: different receptor cells sharing similar signaling pathways.</title>
        <authorList>
            <person name="Zhang Y."/>
            <person name="Hoon M.A."/>
            <person name="Chandrashekar J."/>
            <person name="Mueller K.L."/>
            <person name="Cook B."/>
            <person name="Wu D."/>
            <person name="Zuker C.S."/>
            <person name="Ryba N.J."/>
        </authorList>
    </citation>
    <scope>REVIEW</scope>
</reference>
<organism>
    <name type="scientific">Mus musculus</name>
    <name type="common">Mouse</name>
    <dbReference type="NCBI Taxonomy" id="10090"/>
    <lineage>
        <taxon>Eukaryota</taxon>
        <taxon>Metazoa</taxon>
        <taxon>Chordata</taxon>
        <taxon>Craniata</taxon>
        <taxon>Vertebrata</taxon>
        <taxon>Euteleostomi</taxon>
        <taxon>Mammalia</taxon>
        <taxon>Eutheria</taxon>
        <taxon>Euarchontoglires</taxon>
        <taxon>Glires</taxon>
        <taxon>Rodentia</taxon>
        <taxon>Myomorpha</taxon>
        <taxon>Muroidea</taxon>
        <taxon>Muridae</taxon>
        <taxon>Murinae</taxon>
        <taxon>Mus</taxon>
        <taxon>Mus</taxon>
    </lineage>
</organism>
<feature type="chain" id="PRO_0000082192" description="Taste receptor type 2 member 119">
    <location>
        <begin position="1"/>
        <end position="335"/>
    </location>
</feature>
<feature type="topological domain" description="Extracellular" evidence="1">
    <location>
        <begin position="1"/>
        <end position="7"/>
    </location>
</feature>
<feature type="transmembrane region" description="Helical; Name=1" evidence="1">
    <location>
        <begin position="8"/>
        <end position="28"/>
    </location>
</feature>
<feature type="topological domain" description="Cytoplasmic" evidence="1">
    <location>
        <begin position="29"/>
        <end position="43"/>
    </location>
</feature>
<feature type="transmembrane region" description="Helical; Name=2" evidence="1">
    <location>
        <begin position="44"/>
        <end position="64"/>
    </location>
</feature>
<feature type="topological domain" description="Extracellular" evidence="1">
    <location>
        <begin position="65"/>
        <end position="81"/>
    </location>
</feature>
<feature type="transmembrane region" description="Helical; Name=3" evidence="1">
    <location>
        <begin position="82"/>
        <end position="102"/>
    </location>
</feature>
<feature type="topological domain" description="Cytoplasmic" evidence="1">
    <location>
        <begin position="103"/>
        <end position="124"/>
    </location>
</feature>
<feature type="transmembrane region" description="Helical; Name=4" evidence="1">
    <location>
        <begin position="125"/>
        <end position="145"/>
    </location>
</feature>
<feature type="topological domain" description="Extracellular" evidence="1">
    <location>
        <begin position="146"/>
        <end position="176"/>
    </location>
</feature>
<feature type="transmembrane region" description="Helical; Name=5" evidence="1">
    <location>
        <begin position="177"/>
        <end position="197"/>
    </location>
</feature>
<feature type="topological domain" description="Cytoplasmic" evidence="1">
    <location>
        <begin position="198"/>
        <end position="224"/>
    </location>
</feature>
<feature type="transmembrane region" description="Helical; Name=6" evidence="1">
    <location>
        <begin position="225"/>
        <end position="245"/>
    </location>
</feature>
<feature type="topological domain" description="Extracellular" evidence="1">
    <location>
        <begin position="246"/>
        <end position="256"/>
    </location>
</feature>
<feature type="transmembrane region" description="Helical; Name=7" evidence="1">
    <location>
        <begin position="257"/>
        <end position="277"/>
    </location>
</feature>
<feature type="topological domain" description="Cytoplasmic" evidence="1">
    <location>
        <begin position="278"/>
        <end position="335"/>
    </location>
</feature>
<feature type="glycosylation site" description="N-linked (GlcNAc...) asparagine" evidence="1">
    <location>
        <position position="81"/>
    </location>
</feature>
<feature type="glycosylation site" description="N-linked (GlcNAc...) asparagine" evidence="1">
    <location>
        <position position="163"/>
    </location>
</feature>
<feature type="sequence conflict" description="In Ref. 2; AAI11812." evidence="3" ref="2">
    <original>F</original>
    <variation>S</variation>
    <location>
        <position position="160"/>
    </location>
</feature>
<feature type="sequence conflict" description="In Ref. 2; AAI11812." evidence="3" ref="2">
    <original>T</original>
    <variation>M</variation>
    <location>
        <position position="288"/>
    </location>
</feature>
<name>TR119_MOUSE</name>
<dbReference type="EMBL" id="AF227149">
    <property type="protein sequence ID" value="AAF43922.1"/>
    <property type="molecule type" value="Genomic_DNA"/>
</dbReference>
<dbReference type="EMBL" id="BC111811">
    <property type="protein sequence ID" value="AAI11812.1"/>
    <property type="molecule type" value="mRNA"/>
</dbReference>
<dbReference type="RefSeq" id="NP_065249.2">
    <property type="nucleotide sequence ID" value="NM_020503.2"/>
</dbReference>
<dbReference type="SMR" id="Q9JKT2"/>
<dbReference type="FunCoup" id="Q9JKT2">
    <property type="interactions" value="154"/>
</dbReference>
<dbReference type="STRING" id="10090.ENSMUSP00000050277"/>
<dbReference type="GlyCosmos" id="Q9JKT2">
    <property type="glycosylation" value="2 sites, No reported glycans"/>
</dbReference>
<dbReference type="GlyGen" id="Q9JKT2">
    <property type="glycosylation" value="3 sites"/>
</dbReference>
<dbReference type="PhosphoSitePlus" id="Q9JKT2"/>
<dbReference type="PaxDb" id="10090-ENSMUSP00000050277"/>
<dbReference type="DNASU" id="57254"/>
<dbReference type="GeneID" id="57254"/>
<dbReference type="KEGG" id="mmu:57254"/>
<dbReference type="AGR" id="MGI:2681253"/>
<dbReference type="CTD" id="57254"/>
<dbReference type="MGI" id="MGI:2681253">
    <property type="gene designation" value="Tas2r119"/>
</dbReference>
<dbReference type="eggNOG" id="ENOG502S2SI">
    <property type="taxonomic scope" value="Eukaryota"/>
</dbReference>
<dbReference type="InParanoid" id="Q9JKT2"/>
<dbReference type="OrthoDB" id="8876749at2759"/>
<dbReference type="PhylomeDB" id="Q9JKT2"/>
<dbReference type="Reactome" id="R-MMU-418594">
    <property type="pathway name" value="G alpha (i) signalling events"/>
</dbReference>
<dbReference type="Reactome" id="R-MMU-420499">
    <property type="pathway name" value="Class C/3 (Metabotropic glutamate/pheromone receptors)"/>
</dbReference>
<dbReference type="Reactome" id="R-MMU-9717207">
    <property type="pathway name" value="Sensory perception of sweet, bitter, and umami (glutamate) taste"/>
</dbReference>
<dbReference type="BioGRID-ORCS" id="57254">
    <property type="hits" value="4 hits in 76 CRISPR screens"/>
</dbReference>
<dbReference type="PRO" id="PR:Q9JKT2"/>
<dbReference type="Proteomes" id="UP000000589">
    <property type="component" value="Unplaced"/>
</dbReference>
<dbReference type="RNAct" id="Q9JKT2">
    <property type="molecule type" value="protein"/>
</dbReference>
<dbReference type="GO" id="GO:0016020">
    <property type="term" value="C:membrane"/>
    <property type="evidence" value="ECO:0007669"/>
    <property type="project" value="UniProtKB-SubCell"/>
</dbReference>
<dbReference type="GO" id="GO:0033038">
    <property type="term" value="F:bitter taste receptor activity"/>
    <property type="evidence" value="ECO:0007669"/>
    <property type="project" value="InterPro"/>
</dbReference>
<dbReference type="GO" id="GO:0004930">
    <property type="term" value="F:G protein-coupled receptor activity"/>
    <property type="evidence" value="ECO:0007669"/>
    <property type="project" value="UniProtKB-KW"/>
</dbReference>
<dbReference type="GO" id="GO:0008527">
    <property type="term" value="F:taste receptor activity"/>
    <property type="evidence" value="ECO:0000304"/>
    <property type="project" value="UniProtKB"/>
</dbReference>
<dbReference type="CDD" id="cd15016">
    <property type="entry name" value="7tm_TAS2R1"/>
    <property type="match status" value="1"/>
</dbReference>
<dbReference type="FunFam" id="1.20.1070.10:FF:000055">
    <property type="entry name" value="Taste receptor type 2"/>
    <property type="match status" value="1"/>
</dbReference>
<dbReference type="Gene3D" id="1.20.1070.10">
    <property type="entry name" value="Rhodopsin 7-helix transmembrane proteins"/>
    <property type="match status" value="1"/>
</dbReference>
<dbReference type="InterPro" id="IPR007960">
    <property type="entry name" value="TAS2R"/>
</dbReference>
<dbReference type="PANTHER" id="PTHR11394">
    <property type="entry name" value="TASTE RECEPTOR TYPE 2"/>
    <property type="match status" value="1"/>
</dbReference>
<dbReference type="PANTHER" id="PTHR11394:SF149">
    <property type="entry name" value="TASTE RECEPTOR TYPE 2 MEMBER 1"/>
    <property type="match status" value="1"/>
</dbReference>
<dbReference type="Pfam" id="PF05296">
    <property type="entry name" value="TAS2R"/>
    <property type="match status" value="1"/>
</dbReference>
<dbReference type="SUPFAM" id="SSF81321">
    <property type="entry name" value="Family A G protein-coupled receptor-like"/>
    <property type="match status" value="1"/>
</dbReference>
<keyword id="KW-0297">G-protein coupled receptor</keyword>
<keyword id="KW-0325">Glycoprotein</keyword>
<keyword id="KW-0472">Membrane</keyword>
<keyword id="KW-0675">Receptor</keyword>
<keyword id="KW-1185">Reference proteome</keyword>
<keyword id="KW-0716">Sensory transduction</keyword>
<keyword id="KW-0919">Taste</keyword>
<keyword id="KW-0807">Transducer</keyword>
<keyword id="KW-0812">Transmembrane</keyword>
<keyword id="KW-1133">Transmembrane helix</keyword>
<protein>
    <recommendedName>
        <fullName>Taste receptor type 2 member 119</fullName>
        <shortName>T2R119</shortName>
    </recommendedName>
    <alternativeName>
        <fullName>Taste receptor type 2 member 19</fullName>
        <shortName>T2R19</shortName>
    </alternativeName>
</protein>